<protein>
    <recommendedName>
        <fullName>Interleukin-18 receptor 1</fullName>
        <shortName>IL-18R-1</shortName>
        <shortName>IL-18R1</shortName>
        <ecNumber evidence="4">3.2.2.6</ecNumber>
    </recommendedName>
    <alternativeName>
        <fullName>CD218 antigen-like family member A</fullName>
    </alternativeName>
    <alternativeName>
        <fullName>CDw218a</fullName>
    </alternativeName>
    <alternativeName>
        <fullName>IL1 receptor-related protein</fullName>
        <shortName>IL-1Rrp</shortName>
        <shortName>IL1R-rp</shortName>
    </alternativeName>
    <alternativeName>
        <fullName evidence="14 15 16 17">Interleukin-18 receptor alpha</fullName>
        <shortName>IL-18R-alpha</shortName>
        <shortName evidence="14 15 16 17">IL-18Ralpha</shortName>
    </alternativeName>
    <cdAntigenName>CD218a</cdAntigenName>
</protein>
<keyword id="KW-0002">3D-structure</keyword>
<keyword id="KW-0903">Direct protein sequencing</keyword>
<keyword id="KW-1015">Disulfide bond</keyword>
<keyword id="KW-0325">Glycoprotein</keyword>
<keyword id="KW-0378">Hydrolase</keyword>
<keyword id="KW-0393">Immunoglobulin domain</keyword>
<keyword id="KW-0395">Inflammatory response</keyword>
<keyword id="KW-0472">Membrane</keyword>
<keyword id="KW-0520">NAD</keyword>
<keyword id="KW-1267">Proteomics identification</keyword>
<keyword id="KW-0675">Receptor</keyword>
<keyword id="KW-1185">Reference proteome</keyword>
<keyword id="KW-0677">Repeat</keyword>
<keyword id="KW-0732">Signal</keyword>
<keyword id="KW-0812">Transmembrane</keyword>
<keyword id="KW-1133">Transmembrane helix</keyword>
<dbReference type="EC" id="3.2.2.6" evidence="4"/>
<dbReference type="EMBL" id="U43672">
    <property type="protein sequence ID" value="AAC50390.1"/>
    <property type="molecule type" value="mRNA"/>
</dbReference>
<dbReference type="EMBL" id="AK313967">
    <property type="protein sequence ID" value="BAG36682.1"/>
    <property type="molecule type" value="mRNA"/>
</dbReference>
<dbReference type="EMBL" id="AC007248">
    <property type="protein sequence ID" value="AAY15048.1"/>
    <property type="molecule type" value="Genomic_DNA"/>
</dbReference>
<dbReference type="EMBL" id="BC069575">
    <property type="protein sequence ID" value="AAH69575.1"/>
    <property type="molecule type" value="mRNA"/>
</dbReference>
<dbReference type="EMBL" id="BC093975">
    <property type="protein sequence ID" value="AAH93975.1"/>
    <property type="molecule type" value="mRNA"/>
</dbReference>
<dbReference type="EMBL" id="BC093977">
    <property type="protein sequence ID" value="AAH93977.1"/>
    <property type="molecule type" value="mRNA"/>
</dbReference>
<dbReference type="CCDS" id="CCDS2060.1"/>
<dbReference type="RefSeq" id="NP_001269328.1">
    <property type="nucleotide sequence ID" value="NM_001282399.1"/>
</dbReference>
<dbReference type="RefSeq" id="NP_003846.1">
    <property type="nucleotide sequence ID" value="NM_003855.5"/>
</dbReference>
<dbReference type="RefSeq" id="XP_024308970.1">
    <property type="nucleotide sequence ID" value="XM_024453202.2"/>
</dbReference>
<dbReference type="RefSeq" id="XP_054200332.1">
    <property type="nucleotide sequence ID" value="XM_054344357.1"/>
</dbReference>
<dbReference type="PDB" id="3WO3">
    <property type="method" value="X-ray"/>
    <property type="resolution" value="3.10 A"/>
    <property type="chains" value="B/D/F/H/J/L=20-329"/>
</dbReference>
<dbReference type="PDB" id="3WO4">
    <property type="method" value="X-ray"/>
    <property type="resolution" value="3.10 A"/>
    <property type="chains" value="B=20-329"/>
</dbReference>
<dbReference type="PDB" id="4R6U">
    <property type="method" value="X-ray"/>
    <property type="resolution" value="2.80 A"/>
    <property type="chains" value="A/C=19-329"/>
</dbReference>
<dbReference type="PDBsum" id="3WO3"/>
<dbReference type="PDBsum" id="3WO4"/>
<dbReference type="PDBsum" id="4R6U"/>
<dbReference type="SASBDB" id="Q13478"/>
<dbReference type="SMR" id="Q13478"/>
<dbReference type="BioGRID" id="114337">
    <property type="interactions" value="6"/>
</dbReference>
<dbReference type="ComplexPortal" id="CPX-10041">
    <property type="entry name" value="Interleukin-18 receptor-ligand complex"/>
</dbReference>
<dbReference type="ComplexPortal" id="CPX-10344">
    <property type="entry name" value="Interleukin-37 receptor-ligand complex"/>
</dbReference>
<dbReference type="CORUM" id="Q13478"/>
<dbReference type="FunCoup" id="Q13478">
    <property type="interactions" value="805"/>
</dbReference>
<dbReference type="IntAct" id="Q13478">
    <property type="interactions" value="5"/>
</dbReference>
<dbReference type="MINT" id="Q13478"/>
<dbReference type="STRING" id="9606.ENSP00000387211"/>
<dbReference type="ChEMBL" id="CHEMBL4804253"/>
<dbReference type="GlyCosmos" id="Q13478">
    <property type="glycosylation" value="8 sites, No reported glycans"/>
</dbReference>
<dbReference type="GlyGen" id="Q13478">
    <property type="glycosylation" value="9 sites, 1 N-linked glycan (2 sites), 1 O-linked glycan (1 site)"/>
</dbReference>
<dbReference type="iPTMnet" id="Q13478"/>
<dbReference type="PhosphoSitePlus" id="Q13478"/>
<dbReference type="BioMuta" id="IL18R1"/>
<dbReference type="jPOST" id="Q13478"/>
<dbReference type="MassIVE" id="Q13478"/>
<dbReference type="PaxDb" id="9606-ENSP00000387211"/>
<dbReference type="PeptideAtlas" id="Q13478"/>
<dbReference type="ProteomicsDB" id="59476"/>
<dbReference type="ABCD" id="Q13478">
    <property type="antibodies" value="1 sequenced antibody"/>
</dbReference>
<dbReference type="Antibodypedia" id="2363">
    <property type="antibodies" value="882 antibodies from 38 providers"/>
</dbReference>
<dbReference type="DNASU" id="8809"/>
<dbReference type="Ensembl" id="ENST00000233957.7">
    <property type="protein sequence ID" value="ENSP00000233957.1"/>
    <property type="gene ID" value="ENSG00000115604.12"/>
</dbReference>
<dbReference type="Ensembl" id="ENST00000409599.5">
    <property type="protein sequence ID" value="ENSP00000387211.1"/>
    <property type="gene ID" value="ENSG00000115604.12"/>
</dbReference>
<dbReference type="Ensembl" id="ENST00000410040.5">
    <property type="protein sequence ID" value="ENSP00000386663.1"/>
    <property type="gene ID" value="ENSG00000115604.12"/>
</dbReference>
<dbReference type="GeneID" id="8809"/>
<dbReference type="KEGG" id="hsa:8809"/>
<dbReference type="MANE-Select" id="ENST00000233957.7">
    <property type="protein sequence ID" value="ENSP00000233957.1"/>
    <property type="RefSeq nucleotide sequence ID" value="NM_003855.5"/>
    <property type="RefSeq protein sequence ID" value="NP_003846.1"/>
</dbReference>
<dbReference type="UCSC" id="uc002tbw.6">
    <property type="organism name" value="human"/>
</dbReference>
<dbReference type="AGR" id="HGNC:5988"/>
<dbReference type="CTD" id="8809"/>
<dbReference type="DisGeNET" id="8809"/>
<dbReference type="GeneCards" id="IL18R1"/>
<dbReference type="HGNC" id="HGNC:5988">
    <property type="gene designation" value="IL18R1"/>
</dbReference>
<dbReference type="HPA" id="ENSG00000115604">
    <property type="expression patterns" value="Tissue enhanced (lung, lymphoid tissue)"/>
</dbReference>
<dbReference type="MIM" id="604494">
    <property type="type" value="gene"/>
</dbReference>
<dbReference type="neXtProt" id="NX_Q13478"/>
<dbReference type="OpenTargets" id="ENSG00000115604"/>
<dbReference type="PharmGKB" id="PA29804"/>
<dbReference type="VEuPathDB" id="HostDB:ENSG00000115604"/>
<dbReference type="eggNOG" id="ENOG502QUAC">
    <property type="taxonomic scope" value="Eukaryota"/>
</dbReference>
<dbReference type="GeneTree" id="ENSGT01090000259985"/>
<dbReference type="HOGENOM" id="CLU_025552_3_1_1"/>
<dbReference type="InParanoid" id="Q13478"/>
<dbReference type="OMA" id="HFMGRDE"/>
<dbReference type="OrthoDB" id="9940746at2759"/>
<dbReference type="PAN-GO" id="Q13478">
    <property type="GO annotations" value="4 GO annotations based on evolutionary models"/>
</dbReference>
<dbReference type="PhylomeDB" id="Q13478"/>
<dbReference type="TreeFam" id="TF325519"/>
<dbReference type="PathwayCommons" id="Q13478"/>
<dbReference type="Reactome" id="R-HSA-9008059">
    <property type="pathway name" value="Interleukin-37 signaling"/>
</dbReference>
<dbReference type="Reactome" id="R-HSA-9012546">
    <property type="pathway name" value="Interleukin-18 signaling"/>
</dbReference>
<dbReference type="SignaLink" id="Q13478"/>
<dbReference type="SIGNOR" id="Q13478"/>
<dbReference type="BioGRID-ORCS" id="8809">
    <property type="hits" value="15 hits in 1150 CRISPR screens"/>
</dbReference>
<dbReference type="EvolutionaryTrace" id="Q13478"/>
<dbReference type="GeneWiki" id="IL18R1"/>
<dbReference type="GenomeRNAi" id="8809"/>
<dbReference type="Pharos" id="Q13478">
    <property type="development level" value="Tbio"/>
</dbReference>
<dbReference type="PRO" id="PR:Q13478"/>
<dbReference type="Proteomes" id="UP000005640">
    <property type="component" value="Chromosome 2"/>
</dbReference>
<dbReference type="RNAct" id="Q13478">
    <property type="molecule type" value="protein"/>
</dbReference>
<dbReference type="Bgee" id="ENSG00000115604">
    <property type="expression patterns" value="Expressed in right lung and 123 other cell types or tissues"/>
</dbReference>
<dbReference type="ExpressionAtlas" id="Q13478">
    <property type="expression patterns" value="baseline and differential"/>
</dbReference>
<dbReference type="GO" id="GO:0009986">
    <property type="term" value="C:cell surface"/>
    <property type="evidence" value="ECO:0000318"/>
    <property type="project" value="GO_Central"/>
</dbReference>
<dbReference type="GO" id="GO:0045092">
    <property type="term" value="C:interleukin-18 receptor complex"/>
    <property type="evidence" value="ECO:0000314"/>
    <property type="project" value="UniProtKB"/>
</dbReference>
<dbReference type="GO" id="GO:0005886">
    <property type="term" value="C:plasma membrane"/>
    <property type="evidence" value="ECO:0000318"/>
    <property type="project" value="GO_Central"/>
</dbReference>
<dbReference type="GO" id="GO:0004908">
    <property type="term" value="F:interleukin-1 receptor activity"/>
    <property type="evidence" value="ECO:0007669"/>
    <property type="project" value="InterPro"/>
</dbReference>
<dbReference type="GO" id="GO:0042007">
    <property type="term" value="F:interleukin-18 binding"/>
    <property type="evidence" value="ECO:0000314"/>
    <property type="project" value="UniProtKB"/>
</dbReference>
<dbReference type="GO" id="GO:0042008">
    <property type="term" value="F:interleukin-18 receptor activity"/>
    <property type="evidence" value="ECO:0000314"/>
    <property type="project" value="UniProtKB"/>
</dbReference>
<dbReference type="GO" id="GO:0061809">
    <property type="term" value="F:NAD+ nucleosidase activity, cyclic ADP-ribose generating"/>
    <property type="evidence" value="ECO:0007669"/>
    <property type="project" value="UniProtKB-EC"/>
</dbReference>
<dbReference type="GO" id="GO:0038023">
    <property type="term" value="F:signaling receptor activity"/>
    <property type="evidence" value="ECO:0000304"/>
    <property type="project" value="ProtInc"/>
</dbReference>
<dbReference type="GO" id="GO:0002250">
    <property type="term" value="P:adaptive immune response"/>
    <property type="evidence" value="ECO:0000318"/>
    <property type="project" value="GO_Central"/>
</dbReference>
<dbReference type="GO" id="GO:0006955">
    <property type="term" value="P:immune response"/>
    <property type="evidence" value="ECO:0000304"/>
    <property type="project" value="ProtInc"/>
</dbReference>
<dbReference type="GO" id="GO:0006954">
    <property type="term" value="P:inflammatory response"/>
    <property type="evidence" value="ECO:0007669"/>
    <property type="project" value="UniProtKB-KW"/>
</dbReference>
<dbReference type="GO" id="GO:0035655">
    <property type="term" value="P:interleukin-18-mediated signaling pathway"/>
    <property type="evidence" value="ECO:0000314"/>
    <property type="project" value="UniProtKB"/>
</dbReference>
<dbReference type="GO" id="GO:0030101">
    <property type="term" value="P:natural killer cell activation"/>
    <property type="evidence" value="ECO:0007669"/>
    <property type="project" value="Ensembl"/>
</dbReference>
<dbReference type="GO" id="GO:0120163">
    <property type="term" value="P:negative regulation of cold-induced thermogenesis"/>
    <property type="evidence" value="ECO:0000250"/>
    <property type="project" value="YuBioLab"/>
</dbReference>
<dbReference type="GO" id="GO:0051092">
    <property type="term" value="P:positive regulation of NF-kappaB transcription factor activity"/>
    <property type="evidence" value="ECO:0000314"/>
    <property type="project" value="UniProtKB"/>
</dbReference>
<dbReference type="GO" id="GO:1901224">
    <property type="term" value="P:positive regulation of non-canonical NF-kappaB signal transduction"/>
    <property type="evidence" value="ECO:0007669"/>
    <property type="project" value="Ensembl"/>
</dbReference>
<dbReference type="GO" id="GO:2000556">
    <property type="term" value="P:positive regulation of T-helper 1 cell cytokine production"/>
    <property type="evidence" value="ECO:0000314"/>
    <property type="project" value="UniProtKB"/>
</dbReference>
<dbReference type="GO" id="GO:0032729">
    <property type="term" value="P:positive regulation of type II interferon production"/>
    <property type="evidence" value="ECO:0000314"/>
    <property type="project" value="UniProtKB"/>
</dbReference>
<dbReference type="GO" id="GO:0007165">
    <property type="term" value="P:signal transduction"/>
    <property type="evidence" value="ECO:0000304"/>
    <property type="project" value="ProtInc"/>
</dbReference>
<dbReference type="GO" id="GO:0045063">
    <property type="term" value="P:T-helper 1 cell differentiation"/>
    <property type="evidence" value="ECO:0007669"/>
    <property type="project" value="Ensembl"/>
</dbReference>
<dbReference type="FunFam" id="3.40.50.10140:FF:000002">
    <property type="entry name" value="Interleukin 1 receptor accessory protein"/>
    <property type="match status" value="1"/>
</dbReference>
<dbReference type="FunFam" id="2.60.40.10:FF:001410">
    <property type="entry name" value="Interleukin 18 receptor 1"/>
    <property type="match status" value="1"/>
</dbReference>
<dbReference type="FunFam" id="2.60.40.10:FF:001543">
    <property type="entry name" value="Interleukin 18 receptor 1"/>
    <property type="match status" value="1"/>
</dbReference>
<dbReference type="FunFam" id="2.60.40.10:FF:001441">
    <property type="entry name" value="Interleukin-18 receptor 1"/>
    <property type="match status" value="1"/>
</dbReference>
<dbReference type="Gene3D" id="2.60.40.10">
    <property type="entry name" value="Immunoglobulins"/>
    <property type="match status" value="3"/>
</dbReference>
<dbReference type="Gene3D" id="3.40.50.10140">
    <property type="entry name" value="Toll/interleukin-1 receptor homology (TIR) domain"/>
    <property type="match status" value="1"/>
</dbReference>
<dbReference type="InterPro" id="IPR007110">
    <property type="entry name" value="Ig-like_dom"/>
</dbReference>
<dbReference type="InterPro" id="IPR036179">
    <property type="entry name" value="Ig-like_dom_sf"/>
</dbReference>
<dbReference type="InterPro" id="IPR013783">
    <property type="entry name" value="Ig-like_fold"/>
</dbReference>
<dbReference type="InterPro" id="IPR003599">
    <property type="entry name" value="Ig_sub"/>
</dbReference>
<dbReference type="InterPro" id="IPR015621">
    <property type="entry name" value="IL-1_rcpt_fam"/>
</dbReference>
<dbReference type="InterPro" id="IPR004074">
    <property type="entry name" value="IL-1_rcpt_I/II-typ"/>
</dbReference>
<dbReference type="InterPro" id="IPR000157">
    <property type="entry name" value="TIR_dom"/>
</dbReference>
<dbReference type="InterPro" id="IPR035897">
    <property type="entry name" value="Toll_tir_struct_dom_sf"/>
</dbReference>
<dbReference type="PANTHER" id="PTHR11890">
    <property type="entry name" value="INTERLEUKIN-1 RECEPTOR FAMILY MEMBER"/>
    <property type="match status" value="1"/>
</dbReference>
<dbReference type="PANTHER" id="PTHR11890:SF6">
    <property type="entry name" value="INTERLEUKIN-18 RECEPTOR 1"/>
    <property type="match status" value="1"/>
</dbReference>
<dbReference type="Pfam" id="PF01582">
    <property type="entry name" value="TIR"/>
    <property type="match status" value="1"/>
</dbReference>
<dbReference type="PRINTS" id="PR01536">
    <property type="entry name" value="INTRLKN1R12F"/>
</dbReference>
<dbReference type="PRINTS" id="PR01537">
    <property type="entry name" value="INTRLKN1R1F"/>
</dbReference>
<dbReference type="SMART" id="SM00409">
    <property type="entry name" value="IG"/>
    <property type="match status" value="3"/>
</dbReference>
<dbReference type="SMART" id="SM00255">
    <property type="entry name" value="TIR"/>
    <property type="match status" value="1"/>
</dbReference>
<dbReference type="SUPFAM" id="SSF48726">
    <property type="entry name" value="Immunoglobulin"/>
    <property type="match status" value="2"/>
</dbReference>
<dbReference type="SUPFAM" id="SSF52200">
    <property type="entry name" value="Toll/Interleukin receptor TIR domain"/>
    <property type="match status" value="1"/>
</dbReference>
<dbReference type="PROSITE" id="PS50835">
    <property type="entry name" value="IG_LIKE"/>
    <property type="match status" value="1"/>
</dbReference>
<dbReference type="PROSITE" id="PS50104">
    <property type="entry name" value="TIR"/>
    <property type="match status" value="1"/>
</dbReference>
<name>IL18R_HUMAN</name>
<gene>
    <name evidence="19" type="primary">IL18R1</name>
    <name type="synonym">IL1RRP</name>
</gene>
<reference key="1">
    <citation type="journal article" date="1996" name="J. Biol. Chem.">
        <title>IL-1Rrp is a novel receptor-like molecule similar to the type I interleukin-1 receptor and its homologues T1/ST2 and IL-1R AcP.</title>
        <authorList>
            <person name="Parnet P."/>
            <person name="Garka K.E."/>
            <person name="Bonnert T.P."/>
            <person name="Dower S.K."/>
            <person name="Sims J.E."/>
        </authorList>
    </citation>
    <scope>NUCLEOTIDE SEQUENCE [MRNA]</scope>
    <scope>VARIANT ALA-317 DEL</scope>
    <scope>LACK OF BINDING TO IL1A AND IL1B</scope>
    <scope>TISSUE SPECIFICITY</scope>
    <scope>FUNCTION</scope>
</reference>
<reference key="2">
    <citation type="journal article" date="2004" name="Nat. Genet.">
        <title>Complete sequencing and characterization of 21,243 full-length human cDNAs.</title>
        <authorList>
            <person name="Ota T."/>
            <person name="Suzuki Y."/>
            <person name="Nishikawa T."/>
            <person name="Otsuki T."/>
            <person name="Sugiyama T."/>
            <person name="Irie R."/>
            <person name="Wakamatsu A."/>
            <person name="Hayashi K."/>
            <person name="Sato H."/>
            <person name="Nagai K."/>
            <person name="Kimura K."/>
            <person name="Makita H."/>
            <person name="Sekine M."/>
            <person name="Obayashi M."/>
            <person name="Nishi T."/>
            <person name="Shibahara T."/>
            <person name="Tanaka T."/>
            <person name="Ishii S."/>
            <person name="Yamamoto J."/>
            <person name="Saito K."/>
            <person name="Kawai Y."/>
            <person name="Isono Y."/>
            <person name="Nakamura Y."/>
            <person name="Nagahari K."/>
            <person name="Murakami K."/>
            <person name="Yasuda T."/>
            <person name="Iwayanagi T."/>
            <person name="Wagatsuma M."/>
            <person name="Shiratori A."/>
            <person name="Sudo H."/>
            <person name="Hosoiri T."/>
            <person name="Kaku Y."/>
            <person name="Kodaira H."/>
            <person name="Kondo H."/>
            <person name="Sugawara M."/>
            <person name="Takahashi M."/>
            <person name="Kanda K."/>
            <person name="Yokoi T."/>
            <person name="Furuya T."/>
            <person name="Kikkawa E."/>
            <person name="Omura Y."/>
            <person name="Abe K."/>
            <person name="Kamihara K."/>
            <person name="Katsuta N."/>
            <person name="Sato K."/>
            <person name="Tanikawa M."/>
            <person name="Yamazaki M."/>
            <person name="Ninomiya K."/>
            <person name="Ishibashi T."/>
            <person name="Yamashita H."/>
            <person name="Murakawa K."/>
            <person name="Fujimori K."/>
            <person name="Tanai H."/>
            <person name="Kimata M."/>
            <person name="Watanabe M."/>
            <person name="Hiraoka S."/>
            <person name="Chiba Y."/>
            <person name="Ishida S."/>
            <person name="Ono Y."/>
            <person name="Takiguchi S."/>
            <person name="Watanabe S."/>
            <person name="Yosida M."/>
            <person name="Hotuta T."/>
            <person name="Kusano J."/>
            <person name="Kanehori K."/>
            <person name="Takahashi-Fujii A."/>
            <person name="Hara H."/>
            <person name="Tanase T.-O."/>
            <person name="Nomura Y."/>
            <person name="Togiya S."/>
            <person name="Komai F."/>
            <person name="Hara R."/>
            <person name="Takeuchi K."/>
            <person name="Arita M."/>
            <person name="Imose N."/>
            <person name="Musashino K."/>
            <person name="Yuuki H."/>
            <person name="Oshima A."/>
            <person name="Sasaki N."/>
            <person name="Aotsuka S."/>
            <person name="Yoshikawa Y."/>
            <person name="Matsunawa H."/>
            <person name="Ichihara T."/>
            <person name="Shiohata N."/>
            <person name="Sano S."/>
            <person name="Moriya S."/>
            <person name="Momiyama H."/>
            <person name="Satoh N."/>
            <person name="Takami S."/>
            <person name="Terashima Y."/>
            <person name="Suzuki O."/>
            <person name="Nakagawa S."/>
            <person name="Senoh A."/>
            <person name="Mizoguchi H."/>
            <person name="Goto Y."/>
            <person name="Shimizu F."/>
            <person name="Wakebe H."/>
            <person name="Hishigaki H."/>
            <person name="Watanabe T."/>
            <person name="Sugiyama A."/>
            <person name="Takemoto M."/>
            <person name="Kawakami B."/>
            <person name="Yamazaki M."/>
            <person name="Watanabe K."/>
            <person name="Kumagai A."/>
            <person name="Itakura S."/>
            <person name="Fukuzumi Y."/>
            <person name="Fujimori Y."/>
            <person name="Komiyama M."/>
            <person name="Tashiro H."/>
            <person name="Tanigami A."/>
            <person name="Fujiwara T."/>
            <person name="Ono T."/>
            <person name="Yamada K."/>
            <person name="Fujii Y."/>
            <person name="Ozaki K."/>
            <person name="Hirao M."/>
            <person name="Ohmori Y."/>
            <person name="Kawabata A."/>
            <person name="Hikiji T."/>
            <person name="Kobatake N."/>
            <person name="Inagaki H."/>
            <person name="Ikema Y."/>
            <person name="Okamoto S."/>
            <person name="Okitani R."/>
            <person name="Kawakami T."/>
            <person name="Noguchi S."/>
            <person name="Itoh T."/>
            <person name="Shigeta K."/>
            <person name="Senba T."/>
            <person name="Matsumura K."/>
            <person name="Nakajima Y."/>
            <person name="Mizuno T."/>
            <person name="Morinaga M."/>
            <person name="Sasaki M."/>
            <person name="Togashi T."/>
            <person name="Oyama M."/>
            <person name="Hata H."/>
            <person name="Watanabe M."/>
            <person name="Komatsu T."/>
            <person name="Mizushima-Sugano J."/>
            <person name="Satoh T."/>
            <person name="Shirai Y."/>
            <person name="Takahashi Y."/>
            <person name="Nakagawa K."/>
            <person name="Okumura K."/>
            <person name="Nagase T."/>
            <person name="Nomura N."/>
            <person name="Kikuchi H."/>
            <person name="Masuho Y."/>
            <person name="Yamashita R."/>
            <person name="Nakai K."/>
            <person name="Yada T."/>
            <person name="Nakamura Y."/>
            <person name="Ohara O."/>
            <person name="Isogai T."/>
            <person name="Sugano S."/>
        </authorList>
    </citation>
    <scope>NUCLEOTIDE SEQUENCE [LARGE SCALE MRNA]</scope>
    <source>
        <tissue>Thymus</tissue>
    </source>
</reference>
<reference key="3">
    <citation type="journal article" date="2005" name="Nature">
        <title>Generation and annotation of the DNA sequences of human chromosomes 2 and 4.</title>
        <authorList>
            <person name="Hillier L.W."/>
            <person name="Graves T.A."/>
            <person name="Fulton R.S."/>
            <person name="Fulton L.A."/>
            <person name="Pepin K.H."/>
            <person name="Minx P."/>
            <person name="Wagner-McPherson C."/>
            <person name="Layman D."/>
            <person name="Wylie K."/>
            <person name="Sekhon M."/>
            <person name="Becker M.C."/>
            <person name="Fewell G.A."/>
            <person name="Delehaunty K.D."/>
            <person name="Miner T.L."/>
            <person name="Nash W.E."/>
            <person name="Kremitzki C."/>
            <person name="Oddy L."/>
            <person name="Du H."/>
            <person name="Sun H."/>
            <person name="Bradshaw-Cordum H."/>
            <person name="Ali J."/>
            <person name="Carter J."/>
            <person name="Cordes M."/>
            <person name="Harris A."/>
            <person name="Isak A."/>
            <person name="van Brunt A."/>
            <person name="Nguyen C."/>
            <person name="Du F."/>
            <person name="Courtney L."/>
            <person name="Kalicki J."/>
            <person name="Ozersky P."/>
            <person name="Abbott S."/>
            <person name="Armstrong J."/>
            <person name="Belter E.A."/>
            <person name="Caruso L."/>
            <person name="Cedroni M."/>
            <person name="Cotton M."/>
            <person name="Davidson T."/>
            <person name="Desai A."/>
            <person name="Elliott G."/>
            <person name="Erb T."/>
            <person name="Fronick C."/>
            <person name="Gaige T."/>
            <person name="Haakenson W."/>
            <person name="Haglund K."/>
            <person name="Holmes A."/>
            <person name="Harkins R."/>
            <person name="Kim K."/>
            <person name="Kruchowski S.S."/>
            <person name="Strong C.M."/>
            <person name="Grewal N."/>
            <person name="Goyea E."/>
            <person name="Hou S."/>
            <person name="Levy A."/>
            <person name="Martinka S."/>
            <person name="Mead K."/>
            <person name="McLellan M.D."/>
            <person name="Meyer R."/>
            <person name="Randall-Maher J."/>
            <person name="Tomlinson C."/>
            <person name="Dauphin-Kohlberg S."/>
            <person name="Kozlowicz-Reilly A."/>
            <person name="Shah N."/>
            <person name="Swearengen-Shahid S."/>
            <person name="Snider J."/>
            <person name="Strong J.T."/>
            <person name="Thompson J."/>
            <person name="Yoakum M."/>
            <person name="Leonard S."/>
            <person name="Pearman C."/>
            <person name="Trani L."/>
            <person name="Radionenko M."/>
            <person name="Waligorski J.E."/>
            <person name="Wang C."/>
            <person name="Rock S.M."/>
            <person name="Tin-Wollam A.-M."/>
            <person name="Maupin R."/>
            <person name="Latreille P."/>
            <person name="Wendl M.C."/>
            <person name="Yang S.-P."/>
            <person name="Pohl C."/>
            <person name="Wallis J.W."/>
            <person name="Spieth J."/>
            <person name="Bieri T.A."/>
            <person name="Berkowicz N."/>
            <person name="Nelson J.O."/>
            <person name="Osborne J."/>
            <person name="Ding L."/>
            <person name="Meyer R."/>
            <person name="Sabo A."/>
            <person name="Shotland Y."/>
            <person name="Sinha P."/>
            <person name="Wohldmann P.E."/>
            <person name="Cook L.L."/>
            <person name="Hickenbotham M.T."/>
            <person name="Eldred J."/>
            <person name="Williams D."/>
            <person name="Jones T.A."/>
            <person name="She X."/>
            <person name="Ciccarelli F.D."/>
            <person name="Izaurralde E."/>
            <person name="Taylor J."/>
            <person name="Schmutz J."/>
            <person name="Myers R.M."/>
            <person name="Cox D.R."/>
            <person name="Huang X."/>
            <person name="McPherson J.D."/>
            <person name="Mardis E.R."/>
            <person name="Clifton S.W."/>
            <person name="Warren W.C."/>
            <person name="Chinwalla A.T."/>
            <person name="Eddy S.R."/>
            <person name="Marra M.A."/>
            <person name="Ovcharenko I."/>
            <person name="Furey T.S."/>
            <person name="Miller W."/>
            <person name="Eichler E.E."/>
            <person name="Bork P."/>
            <person name="Suyama M."/>
            <person name="Torrents D."/>
            <person name="Waterston R.H."/>
            <person name="Wilson R.K."/>
        </authorList>
    </citation>
    <scope>NUCLEOTIDE SEQUENCE [LARGE SCALE GENOMIC DNA]</scope>
</reference>
<reference key="4">
    <citation type="journal article" date="2004" name="Genome Res.">
        <title>The status, quality, and expansion of the NIH full-length cDNA project: the Mammalian Gene Collection (MGC).</title>
        <authorList>
            <consortium name="The MGC Project Team"/>
        </authorList>
    </citation>
    <scope>NUCLEOTIDE SEQUENCE [LARGE SCALE MRNA]</scope>
</reference>
<reference key="5">
    <citation type="journal article" date="1997" name="J. Biol. Chem.">
        <title>Purification and characterization of the human interleukin-18 receptor.</title>
        <authorList>
            <person name="Torigoe K."/>
            <person name="Ushio S."/>
            <person name="Okura T."/>
            <person name="Kobayashi S."/>
            <person name="Taniai M."/>
            <person name="Kunikata T."/>
            <person name="Murakami T."/>
            <person name="Sanou O."/>
            <person name="Kojima H."/>
            <person name="Fujii M."/>
            <person name="Ohta T."/>
            <person name="Ikeda M."/>
            <person name="Ikegami H."/>
            <person name="Kurimoto M."/>
        </authorList>
    </citation>
    <scope>PROTEIN SEQUENCE OF 19-29; 55-58; 59-71; 211-221; 222-231; 269-275; 276-280; 319-315 AND 524-535</scope>
    <scope>CHARACTERIZATION</scope>
</reference>
<reference key="6">
    <citation type="journal article" date="2000" name="Int. Immunol.">
        <title>IL-12 synergizes with IL-18 or IL-1beta for IFN-gamma production from human T cells.</title>
        <authorList>
            <person name="Tominaga K."/>
            <person name="Yoshimoto T."/>
            <person name="Torigoe K."/>
            <person name="Kurimoto M."/>
            <person name="Matsui K."/>
            <person name="Hada T."/>
            <person name="Okamura H."/>
            <person name="Nakanishi K."/>
        </authorList>
    </citation>
    <scope>FUNCTION</scope>
    <scope>TISSUE SPECIFICITY</scope>
    <scope>INDUCTION BY IL12/INTERLEUKIN-12</scope>
</reference>
<reference key="7">
    <citation type="journal article" date="2000" name="J. Immunol.">
        <title>IFN-alpha and IL-12 induce IL-18 receptor gene expression in human NK and T cells.</title>
        <authorList>
            <person name="Sareneva T."/>
            <person name="Julkunen I."/>
            <person name="Matikainen S."/>
        </authorList>
    </citation>
    <scope>TISSUE SPECIFICITY</scope>
    <scope>INDUCTION BY IL12/INTERLEUKIN-12</scope>
</reference>
<reference key="8">
    <citation type="journal article" date="2000" name="J. Immunol.">
        <title>IL-18 receptors, their role in ligand binding and function: anti-IL-1RAcPL antibody, a potent antagonist of IL-18.</title>
        <authorList>
            <person name="Debets R."/>
            <person name="Timans J.C."/>
            <person name="Churakowa T."/>
            <person name="Zurawski S."/>
            <person name="de Waal Malefyt R."/>
            <person name="Moore K.W."/>
            <person name="Abrams J.S."/>
            <person name="O'Garra A."/>
            <person name="Bazan J.F."/>
            <person name="Kastelein R.A."/>
        </authorList>
    </citation>
    <scope>TISSUE SPECIFICITY</scope>
</reference>
<reference key="9">
    <citation type="journal article" date="2003" name="Nat. Struct. Biol.">
        <title>The structure and binding mode of interleukin-18.</title>
        <authorList>
            <person name="Kato Z."/>
            <person name="Jee J."/>
            <person name="Shikano H."/>
            <person name="Mishima M."/>
            <person name="Ohki I."/>
            <person name="Ohnishi H."/>
            <person name="Li A."/>
            <person name="Hashimoto K."/>
            <person name="Matsukuma E."/>
            <person name="Omoya K."/>
            <person name="Yamamoto Y."/>
            <person name="Yoneda T."/>
            <person name="Hara T."/>
            <person name="Kondo N."/>
            <person name="Shirakawa M."/>
        </authorList>
    </citation>
    <scope>SUBUNIT</scope>
    <scope>SUBCELLULAR LOCATION</scope>
    <scope>FUNCTION</scope>
</reference>
<reference key="10">
    <citation type="journal article" date="2023" name="Nature">
        <title>Recognition and maturation of IL-18 by caspase-4 noncanonical inflammasome.</title>
        <authorList>
            <person name="Shi X."/>
            <person name="Sun Q."/>
            <person name="Hou Y."/>
            <person name="Zeng H."/>
            <person name="Cao Y."/>
            <person name="Dong M."/>
            <person name="Ding J."/>
            <person name="Shao F."/>
        </authorList>
    </citation>
    <scope>FUNCTION</scope>
</reference>
<reference key="11">
    <citation type="journal article" date="2014" name="FEBS Lett.">
        <title>Structural basis for the specific recognition of IL-18 by its alpha receptor.</title>
        <authorList>
            <person name="Wei H."/>
            <person name="Wang D."/>
            <person name="Qian Y."/>
            <person name="Liu X."/>
            <person name="Fan S."/>
            <person name="Yin H.S."/>
            <person name="Wang X."/>
        </authorList>
    </citation>
    <scope>X-RAY CRYSTALLOGRAPHY (2.80 ANGSTROMS) OF 19-329</scope>
    <scope>GLYCOSYLATION AT ASN-197; ASN-203; ASN-236 AND ASN-297</scope>
    <scope>DISULFIDE BONDS</scope>
    <scope>FUNCTION</scope>
</reference>
<reference key="12">
    <citation type="journal article" date="2014" name="Nat. Commun.">
        <title>The structural basis for receptor recognition of human interleukin-18.</title>
        <authorList>
            <person name="Tsutsumi N."/>
            <person name="Kimura T."/>
            <person name="Arita K."/>
            <person name="Ariyoshi M."/>
            <person name="Ohnishi H."/>
            <person name="Yamamoto T."/>
            <person name="Zuo X."/>
            <person name="Maenaka K."/>
            <person name="Park E.Y."/>
            <person name="Kondo N."/>
            <person name="Shirakawa M."/>
            <person name="Tochio H."/>
            <person name="Kato Z."/>
        </authorList>
    </citation>
    <scope>X-RAY CRYSTALLOGRAPHY (3.10 ANGSTROMS) OF 20-329</scope>
    <scope>GLYCOSYLATION AT ASN-91; ASN-102; ASN-150; ASN-197; ASN-203; ASN-236 AND ASN-297</scope>
    <scope>DISULFIDE BONDS</scope>
    <scope>MUTAGENESIS OF ASN-297</scope>
    <scope>SUBUNIT</scope>
    <scope>SUBCELLULAR LOCATION</scope>
    <scope>FUNCTION</scope>
</reference>
<comment type="function">
    <text evidence="1 5 8 9 10 11 12">Within the IL18 receptor complex, responsible for the binding of the pro-inflammatory cytokine IL18, but not IL1A nor IL1B (PubMed:14528293, PubMed:25261253, PubMed:25500532, PubMed:37993714, PubMed:8626725). Involved in IL18-mediated IFNG synthesis from T-helper 1 (Th1) cells (PubMed:10653850). Contributes to IL18-induced cytokine production, either independently of SLC12A3, or as a complex with SLC12A3 (By similarity).</text>
</comment>
<comment type="catalytic activity">
    <reaction evidence="4">
        <text>NAD(+) + H2O = ADP-D-ribose + nicotinamide + H(+)</text>
        <dbReference type="Rhea" id="RHEA:16301"/>
        <dbReference type="ChEBI" id="CHEBI:15377"/>
        <dbReference type="ChEBI" id="CHEBI:15378"/>
        <dbReference type="ChEBI" id="CHEBI:17154"/>
        <dbReference type="ChEBI" id="CHEBI:57540"/>
        <dbReference type="ChEBI" id="CHEBI:57967"/>
        <dbReference type="EC" id="3.2.2.6"/>
    </reaction>
    <physiologicalReaction direction="left-to-right" evidence="4">
        <dbReference type="Rhea" id="RHEA:16302"/>
    </physiologicalReaction>
</comment>
<comment type="subunit">
    <text evidence="1 8 10 18">Forms a ternary complex with IL18 and IL18RAP (PubMed:14528293, PubMed:25500532). Within this complex, IL18R1 is involved in ligand-binding and IL18RAP in signaling leading to NF-kappa-B and JNK activation (Probable). Interacts with SLC12A3 in peritoneal macrophages; this interaction is increased by IL18 treatment (By similarity).</text>
</comment>
<comment type="interaction">
    <interactant intactId="EBI-9817499">
        <id>Q13478</id>
    </interactant>
    <interactant intactId="EBI-3910835">
        <id>Q14116</id>
        <label>IL18</label>
    </interactant>
    <organismsDiffer>false</organismsDiffer>
    <experiments>2</experiments>
</comment>
<comment type="subcellular location">
    <subcellularLocation>
        <location evidence="8">Membrane</location>
        <topology evidence="18">Single-pass type I membrane protein</topology>
    </subcellularLocation>
</comment>
<comment type="tissue specificity">
    <text evidence="5 6 7 12">Highly expressed in leukocytes, spleen, lung. Also expressed, but at lower levels, in liver, small intestine, colon, prostate, thymus, placenta, and heart. Specifically coexpressed with IL18R1 in Th1 cells (PubMed:10653850, PubMed:10925275, PubMed:11046021).</text>
</comment>
<comment type="induction">
    <text evidence="5 6">Induced by IL12/interleukin-12 in T-cells. Proposed to be a phenotypic marker for T-helper 1 (Th1) cells.</text>
</comment>
<comment type="domain">
    <text evidence="4">The TIR domain mediates NAD(+) hydrolase (NADase) activity. Self-association of TIR domains is required for NADase activity.</text>
</comment>
<comment type="PTM">
    <text evidence="9 10">N-glycosylated. N-linked glycosyl chains contribute to ligand recognition and intra-receptor interactions required for formation of an active ternary receptor complex.</text>
</comment>
<comment type="similarity">
    <text evidence="18">Belongs to the interleukin-1 receptor family.</text>
</comment>
<feature type="signal peptide" evidence="13">
    <location>
        <begin position="1"/>
        <end position="18"/>
    </location>
</feature>
<feature type="chain" id="PRO_0000015448" description="Interleukin-18 receptor 1">
    <location>
        <begin position="19"/>
        <end position="541"/>
    </location>
</feature>
<feature type="topological domain" description="Extracellular" evidence="2">
    <location>
        <begin position="22"/>
        <end position="329"/>
    </location>
</feature>
<feature type="transmembrane region" description="Helical" evidence="2">
    <location>
        <begin position="330"/>
        <end position="350"/>
    </location>
</feature>
<feature type="topological domain" description="Cytoplasmic" evidence="2">
    <location>
        <begin position="351"/>
        <end position="541"/>
    </location>
</feature>
<feature type="domain" description="Ig-like C2-type 1">
    <location>
        <begin position="33"/>
        <end position="121"/>
    </location>
</feature>
<feature type="domain" description="Ig-like C2-type 2">
    <location>
        <begin position="133"/>
        <end position="212"/>
    </location>
</feature>
<feature type="domain" description="Ig-like C2-type 3">
    <location>
        <begin position="220"/>
        <end position="312"/>
    </location>
</feature>
<feature type="domain" description="TIR" evidence="4">
    <location>
        <begin position="373"/>
        <end position="520"/>
    </location>
</feature>
<feature type="active site" evidence="4">
    <location>
        <position position="455"/>
    </location>
</feature>
<feature type="glycosylation site" description="N-linked (GlcNAc...) asparagine" evidence="10 20 21">
    <location>
        <position position="91"/>
    </location>
</feature>
<feature type="glycosylation site" description="N-linked (GlcNAc...) asparagine" evidence="10 20 21">
    <location>
        <position position="102"/>
    </location>
</feature>
<feature type="glycosylation site" description="N-linked (GlcNAc...) asparagine" evidence="10 20 21">
    <location>
        <position position="150"/>
    </location>
</feature>
<feature type="glycosylation site" description="N-linked (GlcNAc...) asparagine" evidence="9 10 20 21 22">
    <location>
        <position position="197"/>
    </location>
</feature>
<feature type="glycosylation site" description="N-linked (GlcNAc...) asparagine" evidence="9 10 20 21 22">
    <location>
        <position position="203"/>
    </location>
</feature>
<feature type="glycosylation site" description="N-linked (GlcNAc...) asparagine" evidence="9 10 20 21 22">
    <location>
        <position position="236"/>
    </location>
</feature>
<feature type="glycosylation site" description="N-linked (GlcNAc...) asparagine" evidence="2">
    <location>
        <position position="255"/>
    </location>
</feature>
<feature type="glycosylation site" description="N-linked (GlcNAc...) asparagine" evidence="9 10 20 21 22">
    <location>
        <position position="297"/>
    </location>
</feature>
<feature type="disulfide bond" evidence="9 10 20 21 22">
    <location>
        <begin position="22"/>
        <end position="41"/>
    </location>
</feature>
<feature type="disulfide bond" evidence="9 10 20 21 22">
    <location>
        <begin position="43"/>
        <end position="81"/>
    </location>
</feature>
<feature type="disulfide bond" evidence="9 10 20 21 22">
    <location>
        <begin position="119"/>
        <end position="158"/>
    </location>
</feature>
<feature type="disulfide bond" evidence="3 9 10 20 21 22">
    <location>
        <begin position="140"/>
        <end position="185"/>
    </location>
</feature>
<feature type="disulfide bond" evidence="3 9 10 20 21 22">
    <location>
        <begin position="237"/>
        <end position="298"/>
    </location>
</feature>
<feature type="sequence variant" id="VAR_053379" description="In dbSNP:rs11465635.">
    <original>R</original>
    <variation>H</variation>
    <location>
        <position position="210"/>
    </location>
</feature>
<feature type="sequence variant" id="VAR_053380" description="In dbSNP:rs11465644.">
    <original>N</original>
    <variation>K</variation>
    <location>
        <position position="232"/>
    </location>
</feature>
<feature type="sequence variant" id="VAR_053381" description="In dbSNP:rs11465648.">
    <original>S</original>
    <variation>N</variation>
    <location>
        <position position="310"/>
    </location>
</feature>
<feature type="sequence variant" id="VAR_014955" evidence="12">
    <location>
        <position position="317"/>
    </location>
</feature>
<feature type="sequence variant" id="VAR_053382" description="In dbSNP:rs12619169.">
    <original>G</original>
    <variation>R</variation>
    <location>
        <position position="423"/>
    </location>
</feature>
<feature type="mutagenesis site" description="Decreases the affinity for IL18 suggesting that the N-linked glycosylation contributes to ligand recognition." evidence="10">
    <original>N</original>
    <variation>Q</variation>
    <location>
        <position position="297"/>
    </location>
</feature>
<feature type="strand" evidence="25">
    <location>
        <begin position="26"/>
        <end position="31"/>
    </location>
</feature>
<feature type="strand" evidence="25">
    <location>
        <begin position="36"/>
        <end position="39"/>
    </location>
</feature>
<feature type="turn" evidence="23">
    <location>
        <begin position="43"/>
        <end position="47"/>
    </location>
</feature>
<feature type="strand" evidence="25">
    <location>
        <begin position="55"/>
        <end position="59"/>
    </location>
</feature>
<feature type="strand" evidence="25">
    <location>
        <begin position="76"/>
        <end position="79"/>
    </location>
</feature>
<feature type="strand" evidence="25">
    <location>
        <begin position="82"/>
        <end position="87"/>
    </location>
</feature>
<feature type="helix" evidence="25">
    <location>
        <begin position="90"/>
        <end position="92"/>
    </location>
</feature>
<feature type="strand" evidence="25">
    <location>
        <begin position="94"/>
        <end position="100"/>
    </location>
</feature>
<feature type="strand" evidence="25">
    <location>
        <begin position="103"/>
        <end position="112"/>
    </location>
</feature>
<feature type="strand" evidence="25">
    <location>
        <begin position="116"/>
        <end position="120"/>
    </location>
</feature>
<feature type="helix" evidence="25">
    <location>
        <begin position="122"/>
        <end position="124"/>
    </location>
</feature>
<feature type="strand" evidence="25">
    <location>
        <begin position="125"/>
        <end position="131"/>
    </location>
</feature>
<feature type="strand" evidence="25">
    <location>
        <begin position="134"/>
        <end position="139"/>
    </location>
</feature>
<feature type="turn" evidence="25">
    <location>
        <begin position="143"/>
        <end position="145"/>
    </location>
</feature>
<feature type="helix" evidence="25">
    <location>
        <begin position="146"/>
        <end position="148"/>
    </location>
</feature>
<feature type="strand" evidence="25">
    <location>
        <begin position="149"/>
        <end position="156"/>
    </location>
</feature>
<feature type="strand" evidence="23">
    <location>
        <begin position="166"/>
        <end position="168"/>
    </location>
</feature>
<feature type="strand" evidence="25">
    <location>
        <begin position="170"/>
        <end position="174"/>
    </location>
</feature>
<feature type="helix" evidence="25">
    <location>
        <begin position="177"/>
        <end position="179"/>
    </location>
</feature>
<feature type="strand" evidence="25">
    <location>
        <begin position="181"/>
        <end position="191"/>
    </location>
</feature>
<feature type="strand" evidence="25">
    <location>
        <begin position="194"/>
        <end position="207"/>
    </location>
</feature>
<feature type="strand" evidence="24">
    <location>
        <begin position="216"/>
        <end position="219"/>
    </location>
</feature>
<feature type="strand" evidence="25">
    <location>
        <begin position="221"/>
        <end position="226"/>
    </location>
</feature>
<feature type="strand" evidence="25">
    <location>
        <begin position="233"/>
        <end position="241"/>
    </location>
</feature>
<feature type="strand" evidence="25">
    <location>
        <begin position="246"/>
        <end position="250"/>
    </location>
</feature>
<feature type="strand" evidence="23">
    <location>
        <begin position="261"/>
        <end position="263"/>
    </location>
</feature>
<feature type="strand" evidence="25">
    <location>
        <begin position="266"/>
        <end position="270"/>
    </location>
</feature>
<feature type="turn" evidence="24">
    <location>
        <begin position="272"/>
        <end position="274"/>
    </location>
</feature>
<feature type="strand" evidence="25">
    <location>
        <begin position="276"/>
        <end position="284"/>
    </location>
</feature>
<feature type="turn" evidence="25">
    <location>
        <begin position="290"/>
        <end position="292"/>
    </location>
</feature>
<feature type="strand" evidence="25">
    <location>
        <begin position="296"/>
        <end position="302"/>
    </location>
</feature>
<feature type="strand" evidence="25">
    <location>
        <begin position="305"/>
        <end position="314"/>
    </location>
</feature>
<evidence type="ECO:0000250" key="1">
    <source>
        <dbReference type="UniProtKB" id="Q61098"/>
    </source>
</evidence>
<evidence type="ECO:0000255" key="2"/>
<evidence type="ECO:0000255" key="3">
    <source>
        <dbReference type="PROSITE-ProRule" id="PRU00114"/>
    </source>
</evidence>
<evidence type="ECO:0000255" key="4">
    <source>
        <dbReference type="PROSITE-ProRule" id="PRU00204"/>
    </source>
</evidence>
<evidence type="ECO:0000269" key="5">
    <source>
    </source>
</evidence>
<evidence type="ECO:0000269" key="6">
    <source>
    </source>
</evidence>
<evidence type="ECO:0000269" key="7">
    <source>
    </source>
</evidence>
<evidence type="ECO:0000269" key="8">
    <source>
    </source>
</evidence>
<evidence type="ECO:0000269" key="9">
    <source>
    </source>
</evidence>
<evidence type="ECO:0000269" key="10">
    <source>
    </source>
</evidence>
<evidence type="ECO:0000269" key="11">
    <source>
    </source>
</evidence>
<evidence type="ECO:0000269" key="12">
    <source>
    </source>
</evidence>
<evidence type="ECO:0000269" key="13">
    <source>
    </source>
</evidence>
<evidence type="ECO:0000303" key="14">
    <source>
    </source>
</evidence>
<evidence type="ECO:0000303" key="15">
    <source>
    </source>
</evidence>
<evidence type="ECO:0000303" key="16">
    <source>
    </source>
</evidence>
<evidence type="ECO:0000303" key="17">
    <source>
    </source>
</evidence>
<evidence type="ECO:0000305" key="18"/>
<evidence type="ECO:0000312" key="19">
    <source>
        <dbReference type="HGNC" id="HGNC:5988"/>
    </source>
</evidence>
<evidence type="ECO:0007744" key="20">
    <source>
        <dbReference type="PDB" id="3WO3"/>
    </source>
</evidence>
<evidence type="ECO:0007744" key="21">
    <source>
        <dbReference type="PDB" id="3WO4"/>
    </source>
</evidence>
<evidence type="ECO:0007744" key="22">
    <source>
        <dbReference type="PDB" id="4R6U"/>
    </source>
</evidence>
<evidence type="ECO:0007829" key="23">
    <source>
        <dbReference type="PDB" id="3WO3"/>
    </source>
</evidence>
<evidence type="ECO:0007829" key="24">
    <source>
        <dbReference type="PDB" id="3WO4"/>
    </source>
</evidence>
<evidence type="ECO:0007829" key="25">
    <source>
        <dbReference type="PDB" id="4R6U"/>
    </source>
</evidence>
<organism>
    <name type="scientific">Homo sapiens</name>
    <name type="common">Human</name>
    <dbReference type="NCBI Taxonomy" id="9606"/>
    <lineage>
        <taxon>Eukaryota</taxon>
        <taxon>Metazoa</taxon>
        <taxon>Chordata</taxon>
        <taxon>Craniata</taxon>
        <taxon>Vertebrata</taxon>
        <taxon>Euteleostomi</taxon>
        <taxon>Mammalia</taxon>
        <taxon>Eutheria</taxon>
        <taxon>Euarchontoglires</taxon>
        <taxon>Primates</taxon>
        <taxon>Haplorrhini</taxon>
        <taxon>Catarrhini</taxon>
        <taxon>Hominidae</taxon>
        <taxon>Homo</taxon>
    </lineage>
</organism>
<accession>Q13478</accession>
<accession>B2R9Y5</accession>
<accession>Q52LC9</accession>
<sequence length="541" mass="62304">MNCRELPLTLWVLISVSTAESCTSRPHITVVEGEPFYLKHCSCSLAHEIETTTKSWYKSSGSQEHVELNPRSSSRIALHDCVLEFWPVELNDTGSYFFQMKNYTQKWKLNVIRRNKHSCFTERQVTSKIVEVKKFFQITCENSYYQTLVNSTSLYKNCKKLLLENNKNPTIKKNAEFEDQGYYSCVHFLHHNGKLFNITKTFNITIVEDRSNIVPVLLGPKLNHVAVELGKNVRLNCSALLNEEDVIYWMFGEENGSDPNIHEEKEMRIMTPEGKWHASKVLRIENIGESNLNVLYNCTVASTGGTDTKSFILVRKADMADIPGHVFTRGMIIAVLILVAVVCLVTVCVIYRVDLVLFYRHLTRRDETLTDGKTYDAFVSYLKECRPENGEEHTFAVEILPRVLEKHFGYKLCIFERDVVPGGAVVDEIHSLIEKSRRLIIVLSKSYMSNEVRYELESGLHEALVERKIKIILIEFTPVTDFTFLPQSLKLLKSHRVLKWKADKSLSYNSRFWKNLLYLMPAKTVKPGRDEPEVLPVLSES</sequence>
<proteinExistence type="evidence at protein level"/>